<dbReference type="EMBL" id="AE005674">
    <property type="protein sequence ID" value="AAN43000.1"/>
    <property type="molecule type" value="Genomic_DNA"/>
</dbReference>
<dbReference type="RefSeq" id="NP_707293.1">
    <property type="nucleotide sequence ID" value="NC_004337.2"/>
</dbReference>
<dbReference type="RefSeq" id="WP_001211010.1">
    <property type="nucleotide sequence ID" value="NZ_WPGW01000080.1"/>
</dbReference>
<dbReference type="STRING" id="198214.SF1399"/>
<dbReference type="PaxDb" id="198214-SF1399"/>
<dbReference type="GeneID" id="1024555"/>
<dbReference type="KEGG" id="sfl:SF1399"/>
<dbReference type="PATRIC" id="fig|198214.7.peg.1649"/>
<dbReference type="HOGENOM" id="CLU_179882_0_0_6"/>
<dbReference type="Proteomes" id="UP000001006">
    <property type="component" value="Chromosome"/>
</dbReference>
<dbReference type="InterPro" id="IPR025611">
    <property type="entry name" value="YobH"/>
</dbReference>
<dbReference type="Pfam" id="PF13996">
    <property type="entry name" value="YobH"/>
    <property type="match status" value="1"/>
</dbReference>
<protein>
    <recommendedName>
        <fullName>Uncharacterized protein YobH</fullName>
    </recommendedName>
</protein>
<reference key="1">
    <citation type="journal article" date="2002" name="Nucleic Acids Res.">
        <title>Genome sequence of Shigella flexneri 2a: insights into pathogenicity through comparison with genomes of Escherichia coli K12 and O157.</title>
        <authorList>
            <person name="Jin Q."/>
            <person name="Yuan Z."/>
            <person name="Xu J."/>
            <person name="Wang Y."/>
            <person name="Shen Y."/>
            <person name="Lu W."/>
            <person name="Wang J."/>
            <person name="Liu H."/>
            <person name="Yang J."/>
            <person name="Yang F."/>
            <person name="Zhang X."/>
            <person name="Zhang J."/>
            <person name="Yang G."/>
            <person name="Wu H."/>
            <person name="Qu D."/>
            <person name="Dong J."/>
            <person name="Sun L."/>
            <person name="Xue Y."/>
            <person name="Zhao A."/>
            <person name="Gao Y."/>
            <person name="Zhu J."/>
            <person name="Kan B."/>
            <person name="Ding K."/>
            <person name="Chen S."/>
            <person name="Cheng H."/>
            <person name="Yao Z."/>
            <person name="He B."/>
            <person name="Chen R."/>
            <person name="Ma D."/>
            <person name="Qiang B."/>
            <person name="Wen Y."/>
            <person name="Hou Y."/>
            <person name="Yu J."/>
        </authorList>
    </citation>
    <scope>NUCLEOTIDE SEQUENCE [LARGE SCALE GENOMIC DNA]</scope>
    <source>
        <strain>301 / Serotype 2a</strain>
    </source>
</reference>
<sequence>MRFIIRTVMLIALVWIGLLLSGYGVLIGSKENAAGLGLQCTYLTARGTSTVQYLHTKSGFLEITDCPLLRKSNIVVDNG</sequence>
<evidence type="ECO:0000255" key="1"/>
<gene>
    <name type="primary">yobH</name>
    <name type="ordered locus">SF1399</name>
</gene>
<organism>
    <name type="scientific">Shigella flexneri</name>
    <dbReference type="NCBI Taxonomy" id="623"/>
    <lineage>
        <taxon>Bacteria</taxon>
        <taxon>Pseudomonadati</taxon>
        <taxon>Pseudomonadota</taxon>
        <taxon>Gammaproteobacteria</taxon>
        <taxon>Enterobacterales</taxon>
        <taxon>Enterobacteriaceae</taxon>
        <taxon>Shigella</taxon>
    </lineage>
</organism>
<proteinExistence type="inferred from homology"/>
<accession>Q83L82</accession>
<keyword id="KW-1185">Reference proteome</keyword>
<keyword id="KW-0732">Signal</keyword>
<name>YOBH_SHIFL</name>
<feature type="signal peptide" evidence="1">
    <location>
        <begin position="1"/>
        <end position="33"/>
    </location>
</feature>
<feature type="chain" id="PRO_0000259713" description="Uncharacterized protein YobH">
    <location>
        <begin position="34"/>
        <end position="79"/>
    </location>
</feature>